<proteinExistence type="evidence at transcript level"/>
<gene>
    <name type="primary">SPS</name>
</gene>
<name>SPSA_BETVU</name>
<keyword id="KW-0328">Glycosyltransferase</keyword>
<keyword id="KW-0808">Transferase</keyword>
<dbReference type="EC" id="2.4.1.14"/>
<dbReference type="EMBL" id="X81975">
    <property type="protein sequence ID" value="CAA57500.1"/>
    <property type="molecule type" value="mRNA"/>
</dbReference>
<dbReference type="PIR" id="S55253">
    <property type="entry name" value="S55253"/>
</dbReference>
<dbReference type="SMR" id="P49031"/>
<dbReference type="CAZy" id="GT4">
    <property type="family name" value="Glycosyltransferase Family 4"/>
</dbReference>
<dbReference type="KEGG" id="bvg:104901950"/>
<dbReference type="UniPathway" id="UPA00371">
    <property type="reaction ID" value="UER00545"/>
</dbReference>
<dbReference type="GO" id="GO:0046524">
    <property type="term" value="F:sucrose-phosphate synthase activity"/>
    <property type="evidence" value="ECO:0007669"/>
    <property type="project" value="UniProtKB-EC"/>
</dbReference>
<dbReference type="GO" id="GO:0005986">
    <property type="term" value="P:sucrose biosynthetic process"/>
    <property type="evidence" value="ECO:0007669"/>
    <property type="project" value="UniProtKB-UniPathway"/>
</dbReference>
<dbReference type="CDD" id="cd03800">
    <property type="entry name" value="GT4_sucrose_synthase"/>
    <property type="match status" value="1"/>
</dbReference>
<dbReference type="CDD" id="cd16419">
    <property type="entry name" value="HAD_SPS"/>
    <property type="match status" value="1"/>
</dbReference>
<dbReference type="FunFam" id="3.40.50.2000:FF:000112">
    <property type="entry name" value="Sucrose-phosphate synthase 1"/>
    <property type="match status" value="1"/>
</dbReference>
<dbReference type="FunFam" id="3.40.50.2000:FF:000077">
    <property type="entry name" value="Sucrose-phosphate synthase 2"/>
    <property type="match status" value="1"/>
</dbReference>
<dbReference type="Gene3D" id="3.40.50.2000">
    <property type="entry name" value="Glycogen Phosphorylase B"/>
    <property type="match status" value="2"/>
</dbReference>
<dbReference type="InterPro" id="IPR001296">
    <property type="entry name" value="Glyco_trans_1"/>
</dbReference>
<dbReference type="InterPro" id="IPR006380">
    <property type="entry name" value="SPP-like_dom"/>
</dbReference>
<dbReference type="InterPro" id="IPR044161">
    <property type="entry name" value="SPS"/>
</dbReference>
<dbReference type="InterPro" id="IPR035659">
    <property type="entry name" value="SPS_C"/>
</dbReference>
<dbReference type="InterPro" id="IPR012819">
    <property type="entry name" value="SPS_pln"/>
</dbReference>
<dbReference type="InterPro" id="IPR000368">
    <property type="entry name" value="Sucrose_synth_GT-B1"/>
</dbReference>
<dbReference type="NCBIfam" id="TIGR02468">
    <property type="entry name" value="sucrsPsyn_pln"/>
    <property type="match status" value="1"/>
</dbReference>
<dbReference type="PANTHER" id="PTHR46039:SF2">
    <property type="entry name" value="SUCROSE-PHOSPHATE SYNTHASE 1"/>
    <property type="match status" value="1"/>
</dbReference>
<dbReference type="PANTHER" id="PTHR46039">
    <property type="entry name" value="SUCROSE-PHOSPHATE SYNTHASE 3-RELATED"/>
    <property type="match status" value="1"/>
</dbReference>
<dbReference type="Pfam" id="PF00534">
    <property type="entry name" value="Glycos_transf_1"/>
    <property type="match status" value="1"/>
</dbReference>
<dbReference type="Pfam" id="PF00862">
    <property type="entry name" value="GT-B_Sucrose_synth"/>
    <property type="match status" value="1"/>
</dbReference>
<dbReference type="Pfam" id="PF05116">
    <property type="entry name" value="S6PP"/>
    <property type="match status" value="1"/>
</dbReference>
<dbReference type="SUPFAM" id="SSF53756">
    <property type="entry name" value="UDP-Glycosyltransferase/glycogen phosphorylase"/>
    <property type="match status" value="1"/>
</dbReference>
<reference key="1">
    <citation type="journal article" date="1995" name="Mol. Gen. Genet.">
        <title>Cloning and expression analysis of sucrose-phosphate synthase from sugar beet (Beta vulgaris L.).</title>
        <authorList>
            <person name="Hesse H."/>
            <person name="Sonnewald U."/>
            <person name="Willmitzer L."/>
        </authorList>
    </citation>
    <scope>NUCLEOTIDE SEQUENCE [MRNA]</scope>
    <source>
        <tissue>Tap root</tissue>
    </source>
</reference>
<feature type="chain" id="PRO_0000204667" description="Probable sucrose-phosphate synthase">
    <location>
        <begin position="1"/>
        <end position="1045"/>
    </location>
</feature>
<feature type="region of interest" description="Disordered" evidence="2">
    <location>
        <begin position="93"/>
        <end position="141"/>
    </location>
</feature>
<feature type="region of interest" description="Disordered" evidence="2">
    <location>
        <begin position="222"/>
        <end position="243"/>
    </location>
</feature>
<feature type="region of interest" description="Disordered" evidence="2">
    <location>
        <begin position="662"/>
        <end position="692"/>
    </location>
</feature>
<feature type="compositionally biased region" description="Basic and acidic residues" evidence="2">
    <location>
        <begin position="93"/>
        <end position="115"/>
    </location>
</feature>
<feature type="compositionally biased region" description="Basic and acidic residues" evidence="2">
    <location>
        <begin position="124"/>
        <end position="137"/>
    </location>
</feature>
<feature type="compositionally biased region" description="Low complexity" evidence="2">
    <location>
        <begin position="664"/>
        <end position="674"/>
    </location>
</feature>
<organism>
    <name type="scientific">Beta vulgaris</name>
    <name type="common">Sugar beet</name>
    <dbReference type="NCBI Taxonomy" id="161934"/>
    <lineage>
        <taxon>Eukaryota</taxon>
        <taxon>Viridiplantae</taxon>
        <taxon>Streptophyta</taxon>
        <taxon>Embryophyta</taxon>
        <taxon>Tracheophyta</taxon>
        <taxon>Spermatophyta</taxon>
        <taxon>Magnoliopsida</taxon>
        <taxon>eudicotyledons</taxon>
        <taxon>Gunneridae</taxon>
        <taxon>Pentapetalae</taxon>
        <taxon>Caryophyllales</taxon>
        <taxon>Chenopodiaceae</taxon>
        <taxon>Betoideae</taxon>
        <taxon>Beta</taxon>
    </lineage>
</organism>
<accession>P49031</accession>
<protein>
    <recommendedName>
        <fullName>Probable sucrose-phosphate synthase</fullName>
        <ecNumber>2.4.1.14</ecNumber>
    </recommendedName>
    <alternativeName>
        <fullName>UDP-glucose-fructose-phosphate glucosyltransferase</fullName>
    </alternativeName>
</protein>
<sequence length="1045" mass="118181">MAGNDWINSYLEAILDVGPGLDDAKSSLLLRERGRFSPTRYFVEEVITGFDETDLHRSWVRAQATRSPQERNTRLENMCWRIWNLARQKKQLENEEAQRKTKRRMELERGRREATADMSEDLSEGEKDISAHGDSTRPRLPRINSLDAMETWISQQKEKKLYLVLISLHGLIRGENMELGRDSDTGGQVKYVVELARALGSMPGVYRVDLLTRQVSSPDVDWSYGEPTEMLNPRDSNGFDDDDDEMGESSGAYIVRIPFGPRDKYIAKEELWPYIPEFVDGALNHIVQMSKVLGEQIGSGETVWPVAIHGHYADAGDSAALLSGGLNVPMLLTGHSLGRDKLEQLLKQGRMSKDDINNTYKIMRRIEAEELSLDASEIVITSTRQEIEEQWHLYDGFDPVLERKLRARMKRGVSCYGRFMPRMVVIPPGMEFNHIVPHEGDMDGETEETEEHPTSPDPPIWAEIMRFFSKPRKPMILALARPDPKKNITTLVKAFGECRPLRELANLTLIMGNRDGIDEMSSTSSSVLLSVLKLIDQYDLYGQVAYPKHHKQADVPEIYRLAAKTKGVFINPAFIEPFGLTLIEAAAHGLPMVATKNGGPVDIQRVLDNGLLVDPHEQQSIATALLKLVADKQLWTKCQQNGLKNIHLYSWPEHSKTYLSRIASSRQRQPQWQRSSDEGLDNQEPESPSDSLRDIKDISLNLEVLVRPEKRVKTLKILGLMTKANSRMLLCSWSNGVHKMLRKARFSDKVDQASSKYPAFRRRKLIYVIAVDGDYEDGLFDIVRRIFDAAGKEKIEGSIGFILSTSYSMPEIQNYLLSKGFNLHDFDAYICNSGSELYYSSLNSEESNIIADSDYHSHIEYRWGGEGLRRTLLRWAASITEKNGENEEQVITEDEEVSTGYCFAFKIKNQNKVPPTKELRKSMRIQALRCHVIYCQNGSKMNVIPVLASRSQALRYLYVRWGVELSKMVVFVGECGDTDYEGLLGGVHKTVILKGVSNTALRSLHANRSYPLSHVVSLDSPNIGEVSKGCSSSEIQSIVTKLSKA</sequence>
<evidence type="ECO:0000250" key="1"/>
<evidence type="ECO:0000256" key="2">
    <source>
        <dbReference type="SAM" id="MobiDB-lite"/>
    </source>
</evidence>
<evidence type="ECO:0000305" key="3"/>
<comment type="function">
    <text evidence="1">Plays a role in photosynthetic sucrose synthesis by catalyzing the rate-limiting step of sucrose biosynthesis from UDP-glucose and fructose- 6-phosphate. Involved in the regulation of carbon partitioning in the leaves of plants. May regulate the synthesis of sucrose and therefore play a major role as a limiting factor in the export of photoassimilates out of the leaf. Plays a role for sucrose availability that is essential for plant growth and fiber elongation (By similarity).</text>
</comment>
<comment type="catalytic activity">
    <reaction>
        <text>beta-D-fructose 6-phosphate + UDP-alpha-D-glucose = sucrose 6(F)-phosphate + UDP + H(+)</text>
        <dbReference type="Rhea" id="RHEA:22172"/>
        <dbReference type="ChEBI" id="CHEBI:15378"/>
        <dbReference type="ChEBI" id="CHEBI:57634"/>
        <dbReference type="ChEBI" id="CHEBI:57723"/>
        <dbReference type="ChEBI" id="CHEBI:58223"/>
        <dbReference type="ChEBI" id="CHEBI:58885"/>
        <dbReference type="EC" id="2.4.1.14"/>
    </reaction>
</comment>
<comment type="activity regulation">
    <text evidence="1">Activity is regulated by phosphorylation and moderated by concentration of metabolites and light.</text>
</comment>
<comment type="pathway">
    <text>Glycan biosynthesis; sucrose biosynthesis; sucrose from D-fructose 6-phosphate and UDP-alpha-D-glucose: step 1/2.</text>
</comment>
<comment type="subunit">
    <text evidence="1">Homodimer or homotetramer.</text>
</comment>
<comment type="tissue specificity">
    <text>Predominantly active in tap root.</text>
</comment>
<comment type="similarity">
    <text evidence="3">Belongs to the glycosyltransferase 1 family.</text>
</comment>